<reference key="1">
    <citation type="journal article" date="2006" name="BMC Plant Biol.">
        <title>Rapid and accurate pyrosequencing of angiosperm plastid genomes.</title>
        <authorList>
            <person name="Moore M.J."/>
            <person name="Dhingra A."/>
            <person name="Soltis P.S."/>
            <person name="Shaw R."/>
            <person name="Farmerie W.G."/>
            <person name="Folta K.M."/>
            <person name="Soltis D.E."/>
        </authorList>
    </citation>
    <scope>NUCLEOTIDE SEQUENCE [LARGE SCALE GENOMIC DNA]</scope>
</reference>
<geneLocation type="chloroplast"/>
<accession>Q09G57</accession>
<comment type="subcellular location">
    <subcellularLocation>
        <location>Plastid</location>
        <location>Chloroplast</location>
    </subcellularLocation>
</comment>
<comment type="similarity">
    <text evidence="1">Belongs to the universal ribosomal protein uS2 family.</text>
</comment>
<gene>
    <name type="primary">rps2</name>
</gene>
<organism>
    <name type="scientific">Platanus occidentalis</name>
    <name type="common">Sycamore</name>
    <name type="synonym">American plane tree</name>
    <dbReference type="NCBI Taxonomy" id="4403"/>
    <lineage>
        <taxon>Eukaryota</taxon>
        <taxon>Viridiplantae</taxon>
        <taxon>Streptophyta</taxon>
        <taxon>Embryophyta</taxon>
        <taxon>Tracheophyta</taxon>
        <taxon>Spermatophyta</taxon>
        <taxon>Magnoliopsida</taxon>
        <taxon>Proteales</taxon>
        <taxon>Platanaceae</taxon>
        <taxon>Platanus</taxon>
    </lineage>
</organism>
<protein>
    <recommendedName>
        <fullName evidence="1">Small ribosomal subunit protein uS2c</fullName>
    </recommendedName>
    <alternativeName>
        <fullName>30S ribosomal protein S2, chloroplastic</fullName>
    </alternativeName>
</protein>
<evidence type="ECO:0000305" key="1"/>
<sequence>MTRRYWNINLEEMMEAGVHFGHGTRKWNPRMAPYISAKRKGIHIINLTRTARFLSEACDLVFDAARRGKRFLIVGTKNKVVDLVASAAIRARCHYVNKKWLGGMSTNWSTTETRLHKFRDLRAEQKAGRLNHLPKRDAAMLKRQLSHLETYLGGIKYMTGLPDIVIIVDQQEEYTALRECVTLGIPTICLIDTNCDPDLADISIPANDDAIASIRLVLNKLVSAICEGRSSYIRNH</sequence>
<dbReference type="EMBL" id="DQ923116">
    <property type="protein sequence ID" value="ABI49767.1"/>
    <property type="molecule type" value="Genomic_DNA"/>
</dbReference>
<dbReference type="RefSeq" id="YP_740554.1">
    <property type="nucleotide sequence ID" value="NC_008335.1"/>
</dbReference>
<dbReference type="SMR" id="Q09G57"/>
<dbReference type="GeneID" id="4271286"/>
<dbReference type="GO" id="GO:0009507">
    <property type="term" value="C:chloroplast"/>
    <property type="evidence" value="ECO:0007669"/>
    <property type="project" value="UniProtKB-SubCell"/>
</dbReference>
<dbReference type="GO" id="GO:0005763">
    <property type="term" value="C:mitochondrial small ribosomal subunit"/>
    <property type="evidence" value="ECO:0007669"/>
    <property type="project" value="TreeGrafter"/>
</dbReference>
<dbReference type="GO" id="GO:0003735">
    <property type="term" value="F:structural constituent of ribosome"/>
    <property type="evidence" value="ECO:0007669"/>
    <property type="project" value="InterPro"/>
</dbReference>
<dbReference type="GO" id="GO:0006412">
    <property type="term" value="P:translation"/>
    <property type="evidence" value="ECO:0007669"/>
    <property type="project" value="UniProtKB-UniRule"/>
</dbReference>
<dbReference type="CDD" id="cd01425">
    <property type="entry name" value="RPS2"/>
    <property type="match status" value="1"/>
</dbReference>
<dbReference type="FunFam" id="3.40.50.10490:FF:000101">
    <property type="match status" value="1"/>
</dbReference>
<dbReference type="FunFam" id="1.10.287.610:FF:000001">
    <property type="entry name" value="30S ribosomal protein S2"/>
    <property type="match status" value="1"/>
</dbReference>
<dbReference type="Gene3D" id="3.40.50.10490">
    <property type="entry name" value="Glucose-6-phosphate isomerase like protein, domain 1"/>
    <property type="match status" value="1"/>
</dbReference>
<dbReference type="Gene3D" id="1.10.287.610">
    <property type="entry name" value="Helix hairpin bin"/>
    <property type="match status" value="1"/>
</dbReference>
<dbReference type="HAMAP" id="MF_00291_B">
    <property type="entry name" value="Ribosomal_uS2_B"/>
    <property type="match status" value="1"/>
</dbReference>
<dbReference type="InterPro" id="IPR001865">
    <property type="entry name" value="Ribosomal_uS2"/>
</dbReference>
<dbReference type="InterPro" id="IPR005706">
    <property type="entry name" value="Ribosomal_uS2_bac/mit/plastid"/>
</dbReference>
<dbReference type="InterPro" id="IPR018130">
    <property type="entry name" value="Ribosomal_uS2_CS"/>
</dbReference>
<dbReference type="InterPro" id="IPR023591">
    <property type="entry name" value="Ribosomal_uS2_flav_dom_sf"/>
</dbReference>
<dbReference type="NCBIfam" id="TIGR01011">
    <property type="entry name" value="rpsB_bact"/>
    <property type="match status" value="1"/>
</dbReference>
<dbReference type="PANTHER" id="PTHR12534">
    <property type="entry name" value="30S RIBOSOMAL PROTEIN S2 PROKARYOTIC AND ORGANELLAR"/>
    <property type="match status" value="1"/>
</dbReference>
<dbReference type="PANTHER" id="PTHR12534:SF0">
    <property type="entry name" value="SMALL RIBOSOMAL SUBUNIT PROTEIN US2M"/>
    <property type="match status" value="1"/>
</dbReference>
<dbReference type="Pfam" id="PF00318">
    <property type="entry name" value="Ribosomal_S2"/>
    <property type="match status" value="1"/>
</dbReference>
<dbReference type="PRINTS" id="PR00395">
    <property type="entry name" value="RIBOSOMALS2"/>
</dbReference>
<dbReference type="SUPFAM" id="SSF52313">
    <property type="entry name" value="Ribosomal protein S2"/>
    <property type="match status" value="1"/>
</dbReference>
<dbReference type="PROSITE" id="PS00962">
    <property type="entry name" value="RIBOSOMAL_S2_1"/>
    <property type="match status" value="1"/>
</dbReference>
<dbReference type="PROSITE" id="PS00963">
    <property type="entry name" value="RIBOSOMAL_S2_2"/>
    <property type="match status" value="1"/>
</dbReference>
<keyword id="KW-0150">Chloroplast</keyword>
<keyword id="KW-0934">Plastid</keyword>
<keyword id="KW-0687">Ribonucleoprotein</keyword>
<keyword id="KW-0689">Ribosomal protein</keyword>
<feature type="chain" id="PRO_0000352152" description="Small ribosomal subunit protein uS2c">
    <location>
        <begin position="1"/>
        <end position="236"/>
    </location>
</feature>
<proteinExistence type="inferred from homology"/>
<name>RR2_PLAOC</name>